<reference key="1">
    <citation type="journal article" date="1989" name="New Biol.">
        <title>Functional relationships and structural determinants of two bacteriophage T4 lysozymes: a soluble (gene e) and a baseplate-associated (gene 5) protein.</title>
        <authorList>
            <person name="Mosig G."/>
            <person name="Lin G.W."/>
            <person name="Franklin J."/>
            <person name="Fan W.H."/>
        </authorList>
    </citation>
    <scope>NUCLEOTIDE SEQUENCE [GENOMIC DNA]</scope>
</reference>
<reference key="2">
    <citation type="submission" date="1990-03" db="EMBL/GenBank/DDBJ databases">
        <authorList>
            <person name="Mosig G."/>
        </authorList>
    </citation>
    <scope>SEQUENCE REVISION</scope>
</reference>
<reference key="3">
    <citation type="journal article" date="2003" name="Microbiol. Mol. Biol. Rev.">
        <title>Bacteriophage T4 genome.</title>
        <authorList>
            <person name="Miller E.S."/>
            <person name="Kutter E."/>
            <person name="Mosig G."/>
            <person name="Arisaka F."/>
            <person name="Kunisawa T."/>
            <person name="Ruger W."/>
        </authorList>
    </citation>
    <scope>NUCLEOTIDE SEQUENCE [LARGE SCALE GENOMIC DNA]</scope>
</reference>
<reference key="4">
    <citation type="journal article" date="1989" name="Nucleic Acids Res.">
        <title>Sequencing, cloning and overexpression of genes of bacteriophage T4 between map positions 74.325 and 77.184.</title>
        <authorList>
            <person name="Koch T."/>
            <person name="Lamm N."/>
            <person name="Rueger W."/>
        </authorList>
    </citation>
    <scope>NUCLEOTIDE SEQUENCE [GENOMIC DNA] OF 1-64</scope>
</reference>
<reference key="5">
    <citation type="journal article" date="1999" name="J. Bacteriol.">
        <title>The C-terminal fragment of the precursor tail lysozyme of bacteriophage T4 stays as a structural component of the baseplate after cleavage.</title>
        <authorList>
            <person name="Kanamaru S."/>
            <person name="Gassner N.C."/>
            <person name="Ye N."/>
            <person name="Takeda S."/>
            <person name="Arisaka F."/>
        </authorList>
    </citation>
    <scope>PROTEIN SEQUENCE OF 1-7 AND 352-358</scope>
    <scope>PROTEOLYTIC CLEAVAGE (BASEPLATE CENTRAL SPIKE PROTEIN GP5 PRECURSOR)</scope>
    <scope>SUBCELLULAR LOCATION (BASEPLATE CENTRAL SPIKE PROTEIN GP5*)</scope>
    <scope>SUBCELLULAR LOCATION (GP5C)</scope>
    <scope>CATALYTIC ACTIVITY (BASEPLATE CENTRAL SPIKE PROTEIN GP5*)</scope>
</reference>
<reference key="6">
    <citation type="journal article" date="2004" name="J. Bacteriol.">
        <title>Processing of the tail lysozyme (gp5) of bacteriophage T4.</title>
        <authorList>
            <person name="Ye N."/>
            <person name="Nemoto N."/>
        </authorList>
    </citation>
    <scope>PROTEIN SEQUENCE OF 1-6 AND 386-390</scope>
    <scope>PROTEOLYTIC CLEAVAGE (BASEPLATE CENTRAL SPIKE PROTEIN GP5 PRECURSOR)</scope>
    <scope>SUBCELLULAR LOCATION (BASEPLATE CENTRAL SPIKE PROTEIN GP5*)</scope>
    <scope>SUBCELLULAR LOCATION (GP5C)</scope>
</reference>
<reference key="7">
    <citation type="journal article" date="1985" name="J. Virol.">
        <title>Isolation and characterization of the bacteriophage T4 tail-associated lysozyme.</title>
        <authorList>
            <person name="Nakagawa H."/>
            <person name="Arisaka F."/>
            <person name="Ishii S."/>
        </authorList>
    </citation>
    <scope>FUNCTION (BASEPLATE CENTRAL SPIKE PROTEIN GP5*)</scope>
    <scope>BIOPHYSICOCHEMICAL PROPERTIES (BASEPLATE CENTRAL SPIKE PROTEIN GP5*)</scope>
    <scope>CATALYTIC ACTIVITY (BASEPLATE CENTRAL SPIKE PROTEIN GP5*)</scope>
</reference>
<reference key="8">
    <citation type="journal article" date="1990" name="J. Virol.">
        <title>Structure of the bacteriophage T4 baseplate as determined by chemical cross-linking.</title>
        <authorList>
            <person name="Watts N.R."/>
            <person name="Coombs D.H."/>
        </authorList>
    </citation>
    <scope>SUBCELLULAR LOCATION (BASEPLATE CENTRAL SPIKE PROTEIN GP5*)</scope>
    <scope>SUBCELLULAR LOCATION (GP5C)</scope>
</reference>
<reference key="9">
    <citation type="journal article" date="2003" name="J. Bacteriol.">
        <title>Homotrimeric, beta-stranded viral adhesins and tail proteins.</title>
        <authorList>
            <person name="Weigele P.R."/>
            <person name="Scanlon E."/>
            <person name="King J."/>
        </authorList>
    </citation>
    <scope>REVIEW</scope>
</reference>
<reference key="10">
    <citation type="journal article" date="2003" name="Cell. Mol. Life Sci.">
        <title>Structure and morphogenesis of bacteriophage T4.</title>
        <authorList>
            <person name="Leiman P.G."/>
            <person name="Kanamaru S."/>
            <person name="Mesyanzhinov V.V."/>
            <person name="Arisaka F."/>
            <person name="Rossmann M.G."/>
        </authorList>
    </citation>
    <scope>REVIEW</scope>
</reference>
<reference key="11">
    <citation type="journal article" date="2006" name="Biochim. Biophys. Acta">
        <title>Association and dissociation of the cell puncturing complex of bacteriophage T4 is controlled by both pH and temperature.</title>
        <authorList>
            <person name="Kumar Sarkar S."/>
            <person name="Takeda Y."/>
            <person name="Kanamaru S."/>
            <person name="Arisaka F."/>
        </authorList>
    </citation>
    <scope>FUNCTION (BASEPLATE CENTRAL SPIKE PROTEIN GP5*)</scope>
    <scope>SUBUNIT (BASEPLATE CENTRAL SPIKE PROTEIN GP5*)</scope>
</reference>
<reference key="12">
    <citation type="journal article" date="2010" name="Virol. J.">
        <title>Morphogenesis of the T4 tail and tail fibers.</title>
        <authorList>
            <person name="Leiman P.G."/>
            <person name="Arisaka F."/>
            <person name="van Raaij M.J."/>
            <person name="Kostyuchenko V.A."/>
            <person name="Aksyuk A.A."/>
            <person name="Kanamaru S."/>
            <person name="Rossmann M.G."/>
        </authorList>
    </citation>
    <scope>REVIEW</scope>
</reference>
<reference key="13">
    <citation type="journal article" date="2011" name="J. Am. Chem. Soc.">
        <title>Screw motion regulates multiple functions of T4 phage protein gene product 5 during cell puncturing.</title>
        <authorList>
            <person name="Nishima W."/>
            <person name="Kanamaru S."/>
            <person name="Arisaka F."/>
            <person name="Kitao A."/>
        </authorList>
    </citation>
    <scope>FUNCTION (BASEPLATE CENTRAL SPIKE PROTEIN GP5*)</scope>
</reference>
<reference key="14">
    <citation type="journal article" date="2002" name="Nature">
        <title>Structure of the cell-puncturing device of bacteriophage T4.</title>
        <authorList>
            <person name="Kanamaru S."/>
            <person name="Leiman P.G."/>
            <person name="Kostyuchenko V.A."/>
            <person name="Chipman P.R."/>
            <person name="Mesyanzhinov V.V."/>
            <person name="Arisaka F."/>
            <person name="Rossmann M.G."/>
        </authorList>
    </citation>
    <scope>X-RAY CRYSTALLOGRAPHY (2.9 ANGSTROMS)</scope>
    <scope>ACTIVE SITE</scope>
    <scope>IDENTIFICATION IN A COMPLEX WITH GP27; GP5C AND GP5.4 (BASEPLATE CENTRAL SPIKE PROTEIN GP5*)</scope>
    <scope>IDENTIFICATION IN A COMPLEX WITH GP27; GP5* AND GP5.4 (BASEPLATE CENTRAL SPIKE PROTEIN GP5C)</scope>
</reference>
<reference key="15">
    <citation type="journal article" date="2003" name="Nat. Struct. Biol.">
        <title>Three-dimensional structure of bacteriophage T4 baseplate.</title>
        <authorList>
            <person name="Kostyuchenko V.A."/>
            <person name="Leiman P.G."/>
            <person name="Chipman P.R."/>
            <person name="Kanamaru S."/>
            <person name="van Raaij M.J."/>
            <person name="Arisaka F."/>
            <person name="Mesyanzhinov V.V."/>
            <person name="Rossmann M.G."/>
        </authorList>
    </citation>
    <scope>STRUCTURE BY ELECTRON MICROSCOPY (12.0 ANGSTROMS)</scope>
    <scope>SUBCELLULAR LOCATION (BASEPLATE CENTRAL SPIKE PROTEIN GP5 PRECURSOR)</scope>
</reference>
<reference key="16">
    <citation type="journal article" date="2005" name="J. Mol. Biol.">
        <title>Control of bacteriophage T4 tail lysozyme activity during the infection process.</title>
        <authorList>
            <person name="Kanamaru S."/>
            <person name="Ishiwata Y."/>
            <person name="Suzuki T."/>
            <person name="Rossmann M.G."/>
            <person name="Arisaka F."/>
        </authorList>
    </citation>
    <scope>X-RAY CRYSTALLOGRAPHY (2.8 ANGSTROMS) IN COMPLEX WITH GP27</scope>
    <scope>PROTEOLYTIC CLEAVAGE (BASEPLATE CENTRAL SPIKE PROTEIN GP5 PRECURSOR)</scope>
    <scope>MUTAGENESIS OF SER-351</scope>
    <scope>SUBUNIT (BASEPLATE CENTRAL SPIKE PROTEIN GP5 PRECURSOR)</scope>
</reference>
<reference evidence="19 20" key="17">
    <citation type="journal article" date="2015" name="Viruses">
        <title>Structure and Biophysical Properties of a Triple-Stranded Beta-Helix Comprising the Central Spike of Bacteriophage T4.</title>
        <authorList>
            <person name="Buth S.A."/>
            <person name="Menin L."/>
            <person name="Shneider M.M."/>
            <person name="Engel J."/>
            <person name="Boudko S.P."/>
            <person name="Leiman P.G."/>
        </authorList>
    </citation>
    <scope>X-RAY CRYSTALLOGRAPHY (1.96 ANGSTROMS) OF 484-575</scope>
    <scope>SUBUNIT (GP5C)</scope>
</reference>
<reference evidence="21" key="18">
    <citation type="journal article" date="2016" name="Nature">
        <title>Structure of the T4 baseplate and its function in triggering sheath contraction.</title>
        <authorList>
            <person name="Taylor N.M."/>
            <person name="Prokhorov N.S."/>
            <person name="Guerrero-Ferreira R.C."/>
            <person name="Shneider M.M."/>
            <person name="Browning C."/>
            <person name="Goldie K.N."/>
            <person name="Stahlberg H."/>
            <person name="Leiman P.G."/>
        </authorList>
    </citation>
    <scope>STRUCTURE BY ELECTRON MICROSCOPY (4.11 ANGSTROMS)</scope>
    <scope>SUBCELLULAR LOCATION (BASEPLATE CENTRAL SPIKE PROTEIN GP5*)</scope>
    <scope>SUBCELLULAR LOCATION (GP5C)</scope>
    <scope>IDENTIFICATION IN A COMPLEX WITH GP27; GP5C AND GP5.4 (BASEPLATE CENTRAL SPIKE PROTEIN GP5*)</scope>
    <scope>IDENTIFICATION IN A COMPLEX WITH GP27; GP5* AND GP5.4 (BASEPLATE CENTRAL SPIKE PROTEIN GP5C)</scope>
</reference>
<name>NEEDL_BPT4</name>
<dbReference type="EC" id="3.2.1.17" evidence="1 3 13"/>
<dbReference type="EMBL" id="X15728">
    <property type="protein sequence ID" value="CAA33749.1"/>
    <property type="molecule type" value="Genomic_DNA"/>
</dbReference>
<dbReference type="EMBL" id="AF158101">
    <property type="protein sequence ID" value="AAD42482.1"/>
    <property type="molecule type" value="Genomic_DNA"/>
</dbReference>
<dbReference type="EMBL" id="X14845">
    <property type="status" value="NOT_ANNOTATED_CDS"/>
    <property type="molecule type" value="Genomic_DNA"/>
</dbReference>
<dbReference type="PIR" id="S25240">
    <property type="entry name" value="G5BPT4"/>
</dbReference>
<dbReference type="RefSeq" id="NP_049757.1">
    <property type="nucleotide sequence ID" value="NC_000866.4"/>
</dbReference>
<dbReference type="PDB" id="1K28">
    <property type="method" value="X-ray"/>
    <property type="resolution" value="2.90 A"/>
    <property type="chains" value="A=1-575"/>
</dbReference>
<dbReference type="PDB" id="1PDL">
    <property type="method" value="EM"/>
    <property type="resolution" value="12.00 A"/>
    <property type="chains" value="A/B/C=1-575"/>
</dbReference>
<dbReference type="PDB" id="1WTH">
    <property type="method" value="X-ray"/>
    <property type="resolution" value="2.80 A"/>
    <property type="chains" value="A=1-575"/>
</dbReference>
<dbReference type="PDB" id="2Z6B">
    <property type="method" value="X-ray"/>
    <property type="resolution" value="3.11 A"/>
    <property type="chains" value="A=1-575"/>
</dbReference>
<dbReference type="PDB" id="3A1M">
    <property type="method" value="X-ray"/>
    <property type="resolution" value="2.00 A"/>
    <property type="chains" value="A/B/C/D/E/F=490-575"/>
</dbReference>
<dbReference type="PDB" id="4JIV">
    <property type="method" value="X-ray"/>
    <property type="resolution" value="1.90 A"/>
    <property type="chains" value="A/B/C=484-575"/>
</dbReference>
<dbReference type="PDB" id="4JIW">
    <property type="method" value="X-ray"/>
    <property type="resolution" value="3.40 A"/>
    <property type="chains" value="A/B/C/E/F/G/I/J/K/M/N/O=484-575"/>
</dbReference>
<dbReference type="PDB" id="4JJ2">
    <property type="method" value="X-ray"/>
    <property type="resolution" value="1.28 A"/>
    <property type="chains" value="A/B/C=483-575"/>
</dbReference>
<dbReference type="PDB" id="4KU0">
    <property type="method" value="X-ray"/>
    <property type="resolution" value="1.15 A"/>
    <property type="chains" value="A/B/C=484-575"/>
</dbReference>
<dbReference type="PDB" id="4OSD">
    <property type="method" value="X-ray"/>
    <property type="resolution" value="1.96 A"/>
    <property type="chains" value="A/B/C/D/E/F/G/H/I/J/K/L/M/N/O/P/Q/R=484-575"/>
</dbReference>
<dbReference type="PDB" id="5IV5">
    <property type="method" value="EM"/>
    <property type="resolution" value="4.11 A"/>
    <property type="chains" value="YA/YB/YC=1-575"/>
</dbReference>
<dbReference type="PDB" id="6P1Z">
    <property type="method" value="X-ray"/>
    <property type="resolution" value="2.10 A"/>
    <property type="chains" value="A/B/C/E/F/G=484-575"/>
</dbReference>
<dbReference type="PDB" id="6P20">
    <property type="method" value="X-ray"/>
    <property type="resolution" value="1.75 A"/>
    <property type="chains" value="A/B/C=484-559"/>
</dbReference>
<dbReference type="PDB" id="6P22">
    <property type="method" value="X-ray"/>
    <property type="resolution" value="2.29 A"/>
    <property type="chains" value="A/B/C=484-565"/>
</dbReference>
<dbReference type="PDB" id="6P2A">
    <property type="method" value="X-ray"/>
    <property type="resolution" value="1.90 A"/>
    <property type="chains" value="A/B/C/D/E/F=484-561"/>
</dbReference>
<dbReference type="PDB" id="6XC0">
    <property type="method" value="X-ray"/>
    <property type="resolution" value="1.78 A"/>
    <property type="chains" value="A/B=174-342"/>
</dbReference>
<dbReference type="PDB" id="6XC1">
    <property type="method" value="X-ray"/>
    <property type="resolution" value="1.92 A"/>
    <property type="chains" value="A=174-342"/>
</dbReference>
<dbReference type="PDB" id="7CN7">
    <property type="method" value="X-ray"/>
    <property type="resolution" value="1.15 A"/>
    <property type="chains" value="A=162-342"/>
</dbReference>
<dbReference type="PDBsum" id="1K28"/>
<dbReference type="PDBsum" id="1PDL"/>
<dbReference type="PDBsum" id="1WTH"/>
<dbReference type="PDBsum" id="2Z6B"/>
<dbReference type="PDBsum" id="3A1M"/>
<dbReference type="PDBsum" id="4JIV"/>
<dbReference type="PDBsum" id="4JIW"/>
<dbReference type="PDBsum" id="4JJ2"/>
<dbReference type="PDBsum" id="4KU0"/>
<dbReference type="PDBsum" id="4OSD"/>
<dbReference type="PDBsum" id="5IV5"/>
<dbReference type="PDBsum" id="6P1Z"/>
<dbReference type="PDBsum" id="6P20"/>
<dbReference type="PDBsum" id="6P22"/>
<dbReference type="PDBsum" id="6P2A"/>
<dbReference type="PDBsum" id="6XC0"/>
<dbReference type="PDBsum" id="6XC1"/>
<dbReference type="PDBsum" id="7CN7"/>
<dbReference type="SMR" id="P16009"/>
<dbReference type="IntAct" id="P16009">
    <property type="interactions" value="1"/>
</dbReference>
<dbReference type="MINT" id="P16009"/>
<dbReference type="CAZy" id="GH24">
    <property type="family name" value="Glycoside Hydrolase Family 24"/>
</dbReference>
<dbReference type="TCDB" id="1.K.1.1.1">
    <property type="family name" value="the gp27/5 t4-baseplate (t4-bp) family"/>
</dbReference>
<dbReference type="GeneID" id="1258817"/>
<dbReference type="KEGG" id="vg:1258817"/>
<dbReference type="OrthoDB" id="2186at10239"/>
<dbReference type="EvolutionaryTrace" id="P16009"/>
<dbReference type="Proteomes" id="UP000009087">
    <property type="component" value="Segment"/>
</dbReference>
<dbReference type="GO" id="GO:0098015">
    <property type="term" value="C:virus tail"/>
    <property type="evidence" value="ECO:0000315"/>
    <property type="project" value="CAFA"/>
</dbReference>
<dbReference type="GO" id="GO:0098025">
    <property type="term" value="C:virus tail, baseplate"/>
    <property type="evidence" value="ECO:0000314"/>
    <property type="project" value="UniProtKB"/>
</dbReference>
<dbReference type="GO" id="GO:0042802">
    <property type="term" value="F:identical protein binding"/>
    <property type="evidence" value="ECO:0000353"/>
    <property type="project" value="CAFA"/>
</dbReference>
<dbReference type="GO" id="GO:0003796">
    <property type="term" value="F:lysozyme activity"/>
    <property type="evidence" value="ECO:0000314"/>
    <property type="project" value="UniProtKB"/>
</dbReference>
<dbReference type="GO" id="GO:0016998">
    <property type="term" value="P:cell wall macromolecule catabolic process"/>
    <property type="evidence" value="ECO:0007669"/>
    <property type="project" value="InterPro"/>
</dbReference>
<dbReference type="GO" id="GO:0042742">
    <property type="term" value="P:defense response to bacterium"/>
    <property type="evidence" value="ECO:0007669"/>
    <property type="project" value="UniProtKB-KW"/>
</dbReference>
<dbReference type="GO" id="GO:0031640">
    <property type="term" value="P:killing of cells of another organism"/>
    <property type="evidence" value="ECO:0007669"/>
    <property type="project" value="UniProtKB-KW"/>
</dbReference>
<dbReference type="GO" id="GO:0009253">
    <property type="term" value="P:peptidoglycan catabolic process"/>
    <property type="evidence" value="ECO:0007669"/>
    <property type="project" value="UniProtKB-UniRule"/>
</dbReference>
<dbReference type="GO" id="GO:0044409">
    <property type="term" value="P:symbiont entry into host"/>
    <property type="evidence" value="ECO:0000314"/>
    <property type="project" value="UniProtKB"/>
</dbReference>
<dbReference type="GO" id="GO:0046718">
    <property type="term" value="P:symbiont entry into host cell"/>
    <property type="evidence" value="ECO:0000315"/>
    <property type="project" value="CAFA"/>
</dbReference>
<dbReference type="GO" id="GO:0098994">
    <property type="term" value="P:symbiont entry into host cell via disruption of host cell envelope"/>
    <property type="evidence" value="ECO:0007669"/>
    <property type="project" value="UniProtKB-KW"/>
</dbReference>
<dbReference type="GO" id="GO:0098932">
    <property type="term" value="P:symbiont entry into host cell via disruption of host cell wall peptidoglycan"/>
    <property type="evidence" value="ECO:0007669"/>
    <property type="project" value="UniProtKB-UniRule"/>
</dbReference>
<dbReference type="GO" id="GO:0098003">
    <property type="term" value="P:viral tail assembly"/>
    <property type="evidence" value="ECO:0007669"/>
    <property type="project" value="UniProtKB-UniRule"/>
</dbReference>
<dbReference type="CDD" id="cd00735">
    <property type="entry name" value="T4-like_lys"/>
    <property type="match status" value="1"/>
</dbReference>
<dbReference type="FunFam" id="2.40.50.260:FF:000001">
    <property type="entry name" value="Baseplate hub subunit and tail lysozyme"/>
    <property type="match status" value="1"/>
</dbReference>
<dbReference type="Gene3D" id="1.10.530.40">
    <property type="match status" value="1"/>
</dbReference>
<dbReference type="Gene3D" id="3.10.450.190">
    <property type="match status" value="1"/>
</dbReference>
<dbReference type="Gene3D" id="2.40.50.260">
    <property type="entry name" value="Nucleic acid-binding protein domain"/>
    <property type="match status" value="1"/>
</dbReference>
<dbReference type="HAMAP" id="MF_04151">
    <property type="entry name" value="NEEDLE_T4"/>
    <property type="match status" value="1"/>
</dbReference>
<dbReference type="InterPro" id="IPR002196">
    <property type="entry name" value="Glyco_hydro_24"/>
</dbReference>
<dbReference type="InterPro" id="IPR010609">
    <property type="entry name" value="Gp5_C"/>
</dbReference>
<dbReference type="InterPro" id="IPR009590">
    <property type="entry name" value="Gp5_OB_N"/>
</dbReference>
<dbReference type="InterPro" id="IPR023346">
    <property type="entry name" value="Lysozyme-like_dom_sf"/>
</dbReference>
<dbReference type="InterPro" id="IPR023347">
    <property type="entry name" value="Lysozyme_dom_sf"/>
</dbReference>
<dbReference type="InterPro" id="IPR046397">
    <property type="entry name" value="NEEDLE_T4"/>
</dbReference>
<dbReference type="InterPro" id="IPR052619">
    <property type="entry name" value="Phage_lysozyme-like"/>
</dbReference>
<dbReference type="InterPro" id="IPR001165">
    <property type="entry name" value="T4-type_lysozyme"/>
</dbReference>
<dbReference type="PANTHER" id="PTHR37406">
    <property type="entry name" value="T4-TYPE LYSOZYME 1-RELATED"/>
    <property type="match status" value="1"/>
</dbReference>
<dbReference type="PANTHER" id="PTHR37406:SF1">
    <property type="entry name" value="T4-TYPE LYSOZYME 1-RELATED"/>
    <property type="match status" value="1"/>
</dbReference>
<dbReference type="Pfam" id="PF06715">
    <property type="entry name" value="Gp5_C"/>
    <property type="match status" value="3"/>
</dbReference>
<dbReference type="Pfam" id="PF06714">
    <property type="entry name" value="Gp5_OB"/>
    <property type="match status" value="1"/>
</dbReference>
<dbReference type="Pfam" id="PF00959">
    <property type="entry name" value="Phage_lysozyme"/>
    <property type="match status" value="1"/>
</dbReference>
<dbReference type="PRINTS" id="PR00684">
    <property type="entry name" value="T4LYSOZYME"/>
</dbReference>
<dbReference type="SUPFAM" id="SSF69255">
    <property type="entry name" value="gp5 N-terminal domain-like"/>
    <property type="match status" value="1"/>
</dbReference>
<dbReference type="SUPFAM" id="SSF53955">
    <property type="entry name" value="Lysozyme-like"/>
    <property type="match status" value="1"/>
</dbReference>
<dbReference type="SUPFAM" id="SSF69349">
    <property type="entry name" value="Phage fibre proteins"/>
    <property type="match status" value="1"/>
</dbReference>
<organismHost>
    <name type="scientific">Escherichia coli</name>
    <dbReference type="NCBI Taxonomy" id="562"/>
</organismHost>
<protein>
    <recommendedName>
        <fullName evidence="1 14 17">Pre-baseplate central spike protein Gp5</fullName>
        <shortName evidence="1 15">Pre-Gp5</shortName>
    </recommendedName>
    <alternativeName>
        <fullName evidence="1">Peptidoglycan hydrolase gp5</fullName>
        <ecNumber evidence="1 3 13">3.2.1.17</ecNumber>
    </alternativeName>
    <component>
        <recommendedName>
            <fullName evidence="1">Baseplate central spike protein Gp5*</fullName>
        </recommendedName>
        <alternativeName>
            <fullName evidence="1 15">Mature Gp5</fullName>
        </alternativeName>
    </component>
    <component>
        <recommendedName>
            <fullName evidence="1 15">Gp5C</fullName>
        </recommendedName>
    </component>
</protein>
<organism>
    <name type="scientific">Enterobacteria phage T4</name>
    <name type="common">Bacteriophage T4</name>
    <dbReference type="NCBI Taxonomy" id="10665"/>
    <lineage>
        <taxon>Viruses</taxon>
        <taxon>Duplodnaviria</taxon>
        <taxon>Heunggongvirae</taxon>
        <taxon>Uroviricota</taxon>
        <taxon>Caudoviricetes</taxon>
        <taxon>Straboviridae</taxon>
        <taxon>Tevenvirinae</taxon>
        <taxon>Tequatrovirus</taxon>
    </lineage>
</organism>
<sequence length="575" mass="63116">MEMISNNLNWFVGVVEDRMDPLKLGRVRVRVVGLHPPQRAQGDVMGIPTEKLPWMSVIQPITSAAMSGIGGSVTGPVEGTRVYGHFLDKWKTNGIVLGTYGGIVREKPNRLEGFSDPTGQYPRRLGNDTNVLNQGGEVGYDSSSNVIQDSNLDTAINPDDRPLSEIPTDDNPNMSMAEMLRRDEGLRLKVYWDTEGYPTIGIGHLIMKQPVRDMAQINKVLSKQVGREITGNPGSITMEEATTLFERDLADMQRDIKSHSKVGPVWQAVNRSRQMALENMAFQMGVGGVAKFNTMLTAMLAGDWEKAYKAGRDSLWYQQTKGRASRVTMIILTGNLESYGVEVKTPARSLSAMAATVAKSSDPADPPIPNDSRILFKEPVSSYKGEYPYVHTMETESGHIQEFDDTPGQERYRLVHPTGTYEEVSPSGRRTRKTVDNLYDITNADGNFLVAGDKKTNVGGSEIYYNMDNRLHQIDGSNTIFVRGDETKTVEGNGTILVKGNVTIIVEGNADITVKGDATTLVEGNQTNTVNGNLSWKVAGTVDWDVGGDWTEKMASMSSISSGQYTIDGSRIDIG</sequence>
<evidence type="ECO:0000255" key="1">
    <source>
        <dbReference type="HAMAP-Rule" id="MF_04151"/>
    </source>
</evidence>
<evidence type="ECO:0000256" key="2">
    <source>
        <dbReference type="SAM" id="MobiDB-lite"/>
    </source>
</evidence>
<evidence type="ECO:0000269" key="3">
    <source>
    </source>
</evidence>
<evidence type="ECO:0000269" key="4">
    <source>
    </source>
</evidence>
<evidence type="ECO:0000269" key="5">
    <source>
    </source>
</evidence>
<evidence type="ECO:0000269" key="6">
    <source>
    </source>
</evidence>
<evidence type="ECO:0000269" key="7">
    <source>
    </source>
</evidence>
<evidence type="ECO:0000269" key="8">
    <source>
    </source>
</evidence>
<evidence type="ECO:0000269" key="9">
    <source>
    </source>
</evidence>
<evidence type="ECO:0000269" key="10">
    <source>
    </source>
</evidence>
<evidence type="ECO:0000269" key="11">
    <source>
    </source>
</evidence>
<evidence type="ECO:0000269" key="12">
    <source>
    </source>
</evidence>
<evidence type="ECO:0000269" key="13">
    <source>
    </source>
</evidence>
<evidence type="ECO:0000303" key="14">
    <source>
    </source>
</evidence>
<evidence type="ECO:0000303" key="15">
    <source>
    </source>
</evidence>
<evidence type="ECO:0000303" key="16">
    <source>
    </source>
</evidence>
<evidence type="ECO:0000303" key="17">
    <source>
    </source>
</evidence>
<evidence type="ECO:0000305" key="18">
    <source>
    </source>
</evidence>
<evidence type="ECO:0007744" key="19">
    <source>
        <dbReference type="PDB" id="4JJ2"/>
    </source>
</evidence>
<evidence type="ECO:0007744" key="20">
    <source>
        <dbReference type="PDB" id="4OSD"/>
    </source>
</evidence>
<evidence type="ECO:0007744" key="21">
    <source>
        <dbReference type="PDB" id="5IV5"/>
    </source>
</evidence>
<evidence type="ECO:0007829" key="22">
    <source>
        <dbReference type="PDB" id="1K28"/>
    </source>
</evidence>
<evidence type="ECO:0007829" key="23">
    <source>
        <dbReference type="PDB" id="1WTH"/>
    </source>
</evidence>
<evidence type="ECO:0007829" key="24">
    <source>
        <dbReference type="PDB" id="2Z6B"/>
    </source>
</evidence>
<evidence type="ECO:0007829" key="25">
    <source>
        <dbReference type="PDB" id="4KU0"/>
    </source>
</evidence>
<evidence type="ECO:0007829" key="26">
    <source>
        <dbReference type="PDB" id="6XC0"/>
    </source>
</evidence>
<evidence type="ECO:0007829" key="27">
    <source>
        <dbReference type="PDB" id="7CN7"/>
    </source>
</evidence>
<comment type="function">
    <molecule>Baseplate central spike protein Gp5*</molecule>
    <text evidence="1 8 9 13 16">Baseplate central spike complex-associated lysozyme that is essential for the localized hydrolysis of bacterial cell wall, so that the tail tube, through which the phage DNA is ejected, can penetrate to the host inner membrane (PubMed:16956798, PubMed:21129200, PubMed:21793574, PubMed:3157805). The tail lysozyme complex at the tip of the tail tube penetrates through the outer membrane into the periplasm and during that process, gp5* dissociates from gp5C and activated (PubMed:16956798). Due to the lower pH in the periplasm, gp5* would dissociate from gp27 which probably still binds to the tip of the tube (PubMed:16956798). This way, lysozyme domain is released and locally digests the peptidoglycan layer to make a hole to let the tube penetrate to the inner membrane (PubMed:16956798). Involved in the tail assembly (PubMed:21129200).</text>
</comment>
<comment type="catalytic activity">
    <molecule>Baseplate central spike protein Gp5*</molecule>
    <reaction evidence="1 3 13">
        <text>Hydrolysis of (1-&gt;4)-beta-linkages between N-acetylmuramic acid and N-acetyl-D-glucosamine residues in a peptidoglycan and between N-acetyl-D-glucosamine residues in chitodextrins.</text>
        <dbReference type="EC" id="3.2.1.17"/>
    </reaction>
</comment>
<comment type="biophysicochemical properties">
    <molecule>Baseplate central spike protein Gp5*</molecule>
    <phDependence>
        <text evidence="13">Optimum pH is 5.8.</text>
    </phDependence>
</comment>
<comment type="subunit">
    <molecule>Baseplate central spike protein Gp5*</molecule>
    <text evidence="1 4 8 12">Monomer (PubMed:16956798). The central spike complex, which creates an extension of the tail tube, is made up of three copies of the gp27-gp5*-gp5C complex and one copy of gp5.4 (PubMed:11823865, PubMed:27193680). Part of the baseplate macromolecular complex which consists of gp5*, gp5C, gp5.4, gp27 (central spike complex); gp6, gp25, gp53 (inner baseplate); gp7, gp8 (intermediate baseplate); gp9, gp10, gp11, gp12 (peripheral); gp48 and gp54 (proximal region of the tail tube) (PubMed:27193680).</text>
</comment>
<comment type="subunit">
    <molecule>Gp5C</molecule>
    <text evidence="1 4 11 12">Homotrimer (PubMed:11823865, PubMed:26295253). The central spike complex, which creates an extension of the tail tube, is made up of three copies of the gp27-gp5*-gp5C complex and one copy of gp5.4 (PubMed:11823865, PubMed:27193680). Part of the baseplate macromolecular complex which consists of gp5*, gp5C, gp5.4, gp27 (central spike complex); gp6, gp25, gp53 (inner baseplate); gp7, gp8 (intermediate baseplate); gp9, gp10, gp11, gp12 (peripheral); gp48 and gp54 (proximal region of the tail tube) (PubMed:27193680).</text>
</comment>
<comment type="subunit">
    <molecule>Pre-baseplate central spike protein Gp5</molecule>
    <text evidence="1 7">Homotrimer.</text>
</comment>
<comment type="interaction">
    <interactant intactId="EBI-1032754">
        <id>P16009</id>
    </interactant>
    <interactant intactId="EBI-1032762">
        <id>P17172</id>
        <label>27</label>
    </interactant>
    <organismsDiffer>false</organismsDiffer>
    <experiments>2</experiments>
</comment>
<comment type="subcellular location">
    <molecule>Baseplate central spike protein Gp5*</molecule>
    <subcellularLocation>
        <location evidence="1 3 6 10 12">Virion</location>
    </subcellularLocation>
    <text evidence="1 12">Present in 3 copies in the baseplate.</text>
</comment>
<comment type="subcellular location">
    <molecule>Gp5C</molecule>
    <subcellularLocation>
        <location evidence="1 3 6 10 12">Virion</location>
    </subcellularLocation>
    <text evidence="1 12">Present in 3 copies in the baseplate.</text>
</comment>
<comment type="subcellular location">
    <molecule>Pre-baseplate central spike protein Gp5</molecule>
    <subcellularLocation>
        <location evidence="1 3 6 10 12">Virion</location>
    </subcellularLocation>
    <text evidence="1 5">Present in the baseplate.</text>
</comment>
<comment type="PTM">
    <molecule>Pre-baseplate central spike protein Gp5</molecule>
    <text evidence="1 3 6 7">In the fully assembled virus, gp5 precursor is cleaved to form the mature tail lysozyme gp5*, and a C-terminus fragment, gp5C (PubMed:10217762, PubMed:15342608, PubMed:15701513). The two fragments remain associated with the virion (PubMed:10217762, PubMed:15342608). The enzymatic activity of the precursor is about 10% of that of mature gp5* (PubMed:10217762). PubMed:15342608 reported a cleavage at Val-390 but the cleavage has been mostly observed at Ser-351 (PubMed:10217762, PubMed:15701513).</text>
</comment>
<comment type="similarity">
    <text evidence="1">Belongs to the glycosyl hydrolase 24 family.</text>
</comment>
<feature type="chain" id="PRO_0000218111" description="Pre-baseplate central spike protein Gp5" evidence="1">
    <location>
        <begin position="1"/>
        <end position="575"/>
    </location>
</feature>
<feature type="chain" id="PRO_0000408360" description="Baseplate central spike protein Gp5*" evidence="1">
    <location>
        <begin position="1"/>
        <end position="351"/>
    </location>
</feature>
<feature type="chain" id="PRO_0000408361" description="Gp5C" evidence="1">
    <location>
        <begin position="352"/>
        <end position="575"/>
    </location>
</feature>
<feature type="region of interest" description="Disordered" evidence="2">
    <location>
        <begin position="150"/>
        <end position="174"/>
    </location>
</feature>
<feature type="active site" description="Proton donor" evidence="1 18">
    <location>
        <position position="184"/>
    </location>
</feature>
<feature type="active site" description="Nucleophile" evidence="1 18">
    <location>
        <position position="193"/>
    </location>
</feature>
<feature type="site" description="Cleavage" evidence="1 3 7">
    <location>
        <begin position="351"/>
        <end position="352"/>
    </location>
</feature>
<feature type="mutagenesis site" description="Reduced proteolytic cleavage of the pre-baseplate central spike protein Gp5." evidence="7">
    <original>S</original>
    <variation>A</variation>
    <variation>H</variation>
    <location>
        <position position="351"/>
    </location>
</feature>
<feature type="mutagenesis site" description="Complete loss of proteolytic cleavage of the Pre-baseplate central spike protein Gp5." evidence="7">
    <original>S</original>
    <variation>K</variation>
    <variation>Q</variation>
    <variation>T</variation>
    <variation>Y</variation>
    <location>
        <position position="351"/>
    </location>
</feature>
<feature type="mutagenesis site" description="Complete loss of proteolytic cleavage of the Pre-baseplate central spike protein Gp5. 90% loss of lysozyme activity." evidence="7">
    <original>S</original>
    <variation>L</variation>
    <location>
        <position position="351"/>
    </location>
</feature>
<feature type="strand" evidence="23">
    <location>
        <begin position="9"/>
        <end position="17"/>
    </location>
</feature>
<feature type="strand" evidence="23">
    <location>
        <begin position="27"/>
        <end position="31"/>
    </location>
</feature>
<feature type="turn" evidence="23">
    <location>
        <begin position="32"/>
        <end position="34"/>
    </location>
</feature>
<feature type="strand" evidence="23">
    <location>
        <begin position="43"/>
        <end position="45"/>
    </location>
</feature>
<feature type="helix" evidence="23">
    <location>
        <begin position="49"/>
        <end position="51"/>
    </location>
</feature>
<feature type="strand" evidence="23">
    <location>
        <begin position="54"/>
        <end position="57"/>
    </location>
</feature>
<feature type="strand" evidence="23">
    <location>
        <begin position="69"/>
        <end position="71"/>
    </location>
</feature>
<feature type="strand" evidence="23">
    <location>
        <begin position="81"/>
        <end position="86"/>
    </location>
</feature>
<feature type="strand" evidence="23">
    <location>
        <begin position="94"/>
        <end position="99"/>
    </location>
</feature>
<feature type="strand" evidence="23">
    <location>
        <begin position="103"/>
        <end position="106"/>
    </location>
</feature>
<feature type="strand" evidence="23">
    <location>
        <begin position="112"/>
        <end position="115"/>
    </location>
</feature>
<feature type="strand" evidence="24">
    <location>
        <begin position="117"/>
        <end position="119"/>
    </location>
</feature>
<feature type="strand" evidence="23">
    <location>
        <begin position="124"/>
        <end position="129"/>
    </location>
</feature>
<feature type="helix" evidence="23">
    <location>
        <begin position="131"/>
        <end position="134"/>
    </location>
</feature>
<feature type="helix" evidence="23">
    <location>
        <begin position="136"/>
        <end position="140"/>
    </location>
</feature>
<feature type="helix" evidence="23">
    <location>
        <begin position="143"/>
        <end position="149"/>
    </location>
</feature>
<feature type="strand" evidence="23">
    <location>
        <begin position="154"/>
        <end position="156"/>
    </location>
</feature>
<feature type="turn" evidence="23">
    <location>
        <begin position="163"/>
        <end position="165"/>
    </location>
</feature>
<feature type="helix" evidence="27">
    <location>
        <begin position="176"/>
        <end position="184"/>
    </location>
</feature>
<feature type="strand" evidence="27">
    <location>
        <begin position="187"/>
        <end position="192"/>
    </location>
</feature>
<feature type="strand" evidence="22">
    <location>
        <begin position="194"/>
        <end position="196"/>
    </location>
</feature>
<feature type="strand" evidence="27">
    <location>
        <begin position="198"/>
        <end position="201"/>
    </location>
</feature>
<feature type="strand" evidence="27">
    <location>
        <begin position="204"/>
        <end position="206"/>
    </location>
</feature>
<feature type="helix" evidence="27">
    <location>
        <begin position="214"/>
        <end position="225"/>
    </location>
</feature>
<feature type="turn" evidence="27">
    <location>
        <begin position="231"/>
        <end position="234"/>
    </location>
</feature>
<feature type="helix" evidence="27">
    <location>
        <begin position="238"/>
        <end position="258"/>
    </location>
</feature>
<feature type="helix" evidence="27">
    <location>
        <begin position="262"/>
        <end position="268"/>
    </location>
</feature>
<feature type="helix" evidence="27">
    <location>
        <begin position="271"/>
        <end position="284"/>
    </location>
</feature>
<feature type="helix" evidence="27">
    <location>
        <begin position="286"/>
        <end position="290"/>
    </location>
</feature>
<feature type="helix" evidence="27">
    <location>
        <begin position="293"/>
        <end position="300"/>
    </location>
</feature>
<feature type="helix" evidence="27">
    <location>
        <begin position="304"/>
        <end position="312"/>
    </location>
</feature>
<feature type="helix" evidence="27">
    <location>
        <begin position="315"/>
        <end position="319"/>
    </location>
</feature>
<feature type="helix" evidence="27">
    <location>
        <begin position="321"/>
        <end position="333"/>
    </location>
</feature>
<feature type="strand" evidence="26">
    <location>
        <begin position="334"/>
        <end position="336"/>
    </location>
</feature>
<feature type="helix" evidence="27">
    <location>
        <begin position="337"/>
        <end position="339"/>
    </location>
</feature>
<feature type="strand" evidence="23">
    <location>
        <begin position="347"/>
        <end position="350"/>
    </location>
</feature>
<feature type="turn" evidence="23">
    <location>
        <begin position="354"/>
        <end position="356"/>
    </location>
</feature>
<feature type="strand" evidence="23">
    <location>
        <begin position="373"/>
        <end position="377"/>
    </location>
</feature>
<feature type="strand" evidence="23">
    <location>
        <begin position="389"/>
        <end position="394"/>
    </location>
</feature>
<feature type="strand" evidence="23">
    <location>
        <begin position="400"/>
        <end position="404"/>
    </location>
</feature>
<feature type="strand" evidence="23">
    <location>
        <begin position="411"/>
        <end position="415"/>
    </location>
</feature>
<feature type="strand" evidence="23">
    <location>
        <begin position="421"/>
        <end position="424"/>
    </location>
</feature>
<feature type="strand" evidence="23">
    <location>
        <begin position="430"/>
        <end position="433"/>
    </location>
</feature>
<feature type="strand" evidence="25">
    <location>
        <begin position="486"/>
        <end position="492"/>
    </location>
</feature>
<feature type="strand" evidence="25">
    <location>
        <begin position="494"/>
        <end position="500"/>
    </location>
</feature>
<feature type="strand" evidence="25">
    <location>
        <begin position="502"/>
        <end position="508"/>
    </location>
</feature>
<feature type="strand" evidence="25">
    <location>
        <begin position="510"/>
        <end position="516"/>
    </location>
</feature>
<feature type="strand" evidence="25">
    <location>
        <begin position="518"/>
        <end position="524"/>
    </location>
</feature>
<feature type="strand" evidence="25">
    <location>
        <begin position="526"/>
        <end position="532"/>
    </location>
</feature>
<feature type="strand" evidence="25">
    <location>
        <begin position="534"/>
        <end position="540"/>
    </location>
</feature>
<feature type="strand" evidence="25">
    <location>
        <begin position="542"/>
        <end position="563"/>
    </location>
</feature>
<feature type="strand" evidence="25">
    <location>
        <begin position="565"/>
        <end position="568"/>
    </location>
</feature>
<feature type="strand" evidence="25">
    <location>
        <begin position="570"/>
        <end position="574"/>
    </location>
</feature>
<accession>P16009</accession>
<keyword id="KW-0002">3D-structure</keyword>
<keyword id="KW-0929">Antimicrobial</keyword>
<keyword id="KW-0081">Bacteriolytic enzyme</keyword>
<keyword id="KW-1235">Degradation of host cell envelope components during virus entry</keyword>
<keyword id="KW-1236">Degradation of host peptidoglycans during virus entry</keyword>
<keyword id="KW-0903">Direct protein sequencing</keyword>
<keyword id="KW-0326">Glycosidase</keyword>
<keyword id="KW-0378">Hydrolase</keyword>
<keyword id="KW-0426">Late protein</keyword>
<keyword id="KW-1185">Reference proteome</keyword>
<keyword id="KW-1226">Viral baseplate protein</keyword>
<keyword id="KW-1171">Viral genome ejection through host cell envelope</keyword>
<keyword id="KW-1162">Viral penetration into host cytoplasm</keyword>
<keyword id="KW-1188">Viral release from host cell</keyword>
<keyword id="KW-1245">Viral tail assembly</keyword>
<keyword id="KW-1227">Viral tail protein</keyword>
<keyword id="KW-0946">Virion</keyword>
<keyword id="KW-1160">Virus entry into host cell</keyword>
<gene>
    <name evidence="1" type="primary">5</name>
</gene>
<proteinExistence type="evidence at protein level"/>